<feature type="peptide" id="PRO_0000378651" description="Hypertrehalosaemic factor" evidence="3">
    <location>
        <begin position="1"/>
        <end position="10"/>
    </location>
</feature>
<feature type="modified residue" description="Pyrrolidone carboxylic acid" evidence="3">
    <location>
        <position position="1"/>
    </location>
</feature>
<feature type="modified residue" description="Threonine amide" evidence="3">
    <location>
        <position position="10"/>
    </location>
</feature>
<name>HTF_GYNCS</name>
<proteinExistence type="evidence at protein level"/>
<protein>
    <recommendedName>
        <fullName evidence="1">Hypertrehalosaemic factor</fullName>
    </recommendedName>
    <alternativeName>
        <fullName evidence="4">Adipokinetic hormone 1</fullName>
        <shortName evidence="4">GynCa-AKH-1</shortName>
    </alternativeName>
    <alternativeName>
        <fullName evidence="1">Hypertrehalosaemic neuropeptide</fullName>
    </alternativeName>
</protein>
<keyword id="KW-0027">Amidation</keyword>
<keyword id="KW-0903">Direct protein sequencing</keyword>
<keyword id="KW-0372">Hormone</keyword>
<keyword id="KW-0527">Neuropeptide</keyword>
<keyword id="KW-0873">Pyrrolidone carboxylic acid</keyword>
<keyword id="KW-0964">Secreted</keyword>
<comment type="function">
    <text evidence="5">Hypertrehalosaemic factors are neuropeptides that elevate the level of trehalose in the hemolymph (trehalose is the major carbohydrate in the hemolymph of insects).</text>
</comment>
<comment type="subcellular location">
    <subcellularLocation>
        <location evidence="5">Secreted</location>
    </subcellularLocation>
</comment>
<comment type="similarity">
    <text evidence="2">Belongs to the AKH/HRTH/RPCH family.</text>
</comment>
<accession>P85849</accession>
<evidence type="ECO:0000250" key="1">
    <source>
        <dbReference type="UniProtKB" id="P67790"/>
    </source>
</evidence>
<evidence type="ECO:0000255" key="2"/>
<evidence type="ECO:0000269" key="3">
    <source>
    </source>
</evidence>
<evidence type="ECO:0000303" key="4">
    <source>
    </source>
</evidence>
<evidence type="ECO:0000305" key="5"/>
<dbReference type="GO" id="GO:0005576">
    <property type="term" value="C:extracellular region"/>
    <property type="evidence" value="ECO:0007669"/>
    <property type="project" value="UniProtKB-SubCell"/>
</dbReference>
<dbReference type="GO" id="GO:0005179">
    <property type="term" value="F:hormone activity"/>
    <property type="evidence" value="ECO:0007669"/>
    <property type="project" value="UniProtKB-KW"/>
</dbReference>
<dbReference type="GO" id="GO:0007218">
    <property type="term" value="P:neuropeptide signaling pathway"/>
    <property type="evidence" value="ECO:0007669"/>
    <property type="project" value="UniProtKB-KW"/>
</dbReference>
<dbReference type="InterPro" id="IPR002047">
    <property type="entry name" value="Adipokinetic_hormone_CS"/>
</dbReference>
<dbReference type="PROSITE" id="PS00256">
    <property type="entry name" value="AKH"/>
    <property type="match status" value="1"/>
</dbReference>
<organism>
    <name type="scientific">Gyna cf. cafforum (strain SR-2005)</name>
    <name type="common">Cockroach</name>
    <dbReference type="NCBI Taxonomy" id="348763"/>
    <lineage>
        <taxon>Eukaryota</taxon>
        <taxon>Metazoa</taxon>
        <taxon>Ecdysozoa</taxon>
        <taxon>Arthropoda</taxon>
        <taxon>Hexapoda</taxon>
        <taxon>Insecta</taxon>
        <taxon>Pterygota</taxon>
        <taxon>Neoptera</taxon>
        <taxon>Polyneoptera</taxon>
        <taxon>Dictyoptera</taxon>
        <taxon>Blattodea</taxon>
        <taxon>Blaberoidea</taxon>
        <taxon>Blaberidae</taxon>
        <taxon>Gyninae</taxon>
        <taxon>Gyna</taxon>
    </lineage>
</organism>
<reference evidence="5" key="1">
    <citation type="journal article" date="2009" name="BMC Evol. Biol.">
        <title>A proteomic approach for studying insect phylogeny: CAPA peptides of ancient insect taxa (Dictyoptera, Blattoptera) as a test case.</title>
        <authorList>
            <person name="Roth S."/>
            <person name="Fromm B."/>
            <person name="Gaede G."/>
            <person name="Predel R."/>
        </authorList>
    </citation>
    <scope>PROTEIN SEQUENCE</scope>
    <scope>PYROGLUTAMATE FORMATION AT GLN-1</scope>
    <scope>AMIDATION AT THR-10</scope>
    <source>
        <tissue evidence="3">Corpora cardiaca</tissue>
    </source>
</reference>
<sequence>QVNFSPGWGT</sequence>